<name>ABCA2_DICDI</name>
<gene>
    <name type="primary">abcA2</name>
    <name type="ORF">DDB_G0267438</name>
</gene>
<comment type="subcellular location">
    <subcellularLocation>
        <location evidence="3">Membrane</location>
        <topology evidence="3">Multi-pass membrane protein</topology>
    </subcellularLocation>
</comment>
<comment type="similarity">
    <text evidence="3">Belongs to the ABC transporter superfamily. ABCA family.</text>
</comment>
<sequence length="1621" mass="181214">MGEFKSQLRTLLKKNLLLKGKSKCAICCEILFPIIVILVIFAILVLVMAFKANYDPYNASNFVNRFENTVLLYGNADGALNVEQLGVMNILKNEVATAKNLNSTQIDQLFIEINDQTAMEAFFQNKSDFVFSAVWFNNSALSSGTNPFQYNIRVDSDDVMDTEELIKEDDTSDSEVYVKKRFVATQVAMDQAIFSYFGLNKTLNVKGQRYPDPWTELWQKWIQGRDGIFKDAGSVFITAALMIFGFRLITDLVIEKETKIRESMKMMGLNDLAYFISWMITSLVTALPVNLIISIILKGSSVIHHTNWGVVIFTLILYLLTLLLLAFILSMFFDKSKFCGLLSFVIIIAINIGGIFVAKYDFAPGAKLFLCLISPIAIACSIFAMSARDLEEINTYNWDMMVTENQVIGMLVLDIFFYIFLVWYLDNVVTTEFGTKQKWYFLFTKKYWFPKKCNENGDEQDIESTYQNEDVEMTPVGVGQKVTISIRNLRKEYNTGDGLRVAVNDLYLDMYENQIHALLGPNGSGKSTTIGMMTGLTPPTNGNAFVHGYGILNQMSSVRKHLGVCPQTDIIWQQLTVLDHLKIYASLKGVSPSEIQREAEKMAVEVDLGEKIHSQAGSLSGGQKRKLCLGIAFIGRSDVIFLDEVSSGMDPLSRRVVWDFLLKYKKGRTIILTTHYLEEADYLGDRIAIISHGKLRCDGSSLYLKNKFGCGYLLTCSKILSSMNNFNAQQVTEFIHNYIPEATILSNAGTELSYRLPTASLPHFAQFFREFDDRLQSFGLLTYGISVTTLEEVFLSLGREAALEKGGFNIDQNENQDLEQLRKSIAISSTGVKAGQQFKGLLIKRIKTSIKDAKSFFLTLVIPLVFIIGSIIMYKAMDKPQIFYNNATVPLTMNLGIYSGLENNFVPMQSSNELNWENSLNSSPYFNKFRFIPQTENFEDYLIEGKTNGSFAYKSSAGAINFTLPIDVSSTTIDYTAFYNKDYIHSLPVHINLVNDAVLRKHNNIGIQVTNMPFKHVLSNFDLASEGMNISSIVYFIIIMMAGYALMAGSFAGNVAQERTNRVKRLLYISGCKKYVYWLSNLVWDYFFSFILILLTTCILAGIRENYKSQFGLMFLCLILFCVSVVPLSYLLSYRFASFGKATGAITAIHFAIGIIFVIISLNLRIQVLIDQDVDFQKAADAVDIVFCILSPLFAYSRILFLVSEFPGSVRVGTLKVDNYWSMDYGGSPMIILAAHCIVWVSWIMILDYTPELIGKIRNPKNIEAPPPPDDEDSDVTAERTRLLSVGPNDEPLQFRNLHKLFPAVGKAAPKAAVYNSTLSIPKGQTFGLLGLNGAGKTTTIAMLCGDIVPSSGEVTINGHDLITDRGQALRSNGLCPQFDALITLLSAREQLTLYCAIKGVPEDKVKEVVEAFIKMMDLGAIANSNTGGYSGGNKRKTSLSIAMLGNPSIVSLDEPSTGCDAVVRKYIWNVVSELAKDKVIILTSHSMAEVEALCYRMTIMRDGKMKCLGSIQHIKSKFGAGYTFDVKFKKEYLDSGIQTVLKAIPNSIVLDEHDVMASFEIPNPPDNPVKISTLFESLSHLTILDDYNVSQTSLESVFLKLTGASYEDRLNLNNQKHTSD</sequence>
<accession>Q8T6J5</accession>
<accession>Q55GB0</accession>
<dbReference type="EMBL" id="AF465304">
    <property type="protein sequence ID" value="AAL85295.1"/>
    <property type="molecule type" value="Genomic_DNA"/>
</dbReference>
<dbReference type="EMBL" id="AAFI02000003">
    <property type="protein sequence ID" value="EAL73171.1"/>
    <property type="molecule type" value="Genomic_DNA"/>
</dbReference>
<dbReference type="RefSeq" id="XP_647274.1">
    <property type="nucleotide sequence ID" value="XM_642182.1"/>
</dbReference>
<dbReference type="SMR" id="Q8T6J5"/>
<dbReference type="FunCoup" id="Q8T6J5">
    <property type="interactions" value="149"/>
</dbReference>
<dbReference type="STRING" id="44689.Q8T6J5"/>
<dbReference type="TCDB" id="3.A.1.211.19">
    <property type="family name" value="the atp-binding cassette (abc) superfamily"/>
</dbReference>
<dbReference type="PaxDb" id="44689-DDB0191223"/>
<dbReference type="EnsemblProtists" id="EAL73171">
    <property type="protein sequence ID" value="EAL73171"/>
    <property type="gene ID" value="DDB_G0267438"/>
</dbReference>
<dbReference type="GeneID" id="8616081"/>
<dbReference type="KEGG" id="ddi:DDB_G0267438"/>
<dbReference type="dictyBase" id="DDB_G0267438">
    <property type="gene designation" value="abcA2"/>
</dbReference>
<dbReference type="VEuPathDB" id="AmoebaDB:DDB_G0267438"/>
<dbReference type="eggNOG" id="KOG0059">
    <property type="taxonomic scope" value="Eukaryota"/>
</dbReference>
<dbReference type="HOGENOM" id="CLU_000604_19_1_1"/>
<dbReference type="InParanoid" id="Q8T6J5"/>
<dbReference type="OMA" id="FMWNVIA"/>
<dbReference type="PhylomeDB" id="Q8T6J5"/>
<dbReference type="Reactome" id="R-DDI-1369062">
    <property type="pathway name" value="ABC transporters in lipid homeostasis"/>
</dbReference>
<dbReference type="Reactome" id="R-DDI-2453902">
    <property type="pathway name" value="The canonical retinoid cycle in rods (twilight vision)"/>
</dbReference>
<dbReference type="Reactome" id="R-DDI-382556">
    <property type="pathway name" value="ABC-family proteins mediated transport"/>
</dbReference>
<dbReference type="Reactome" id="R-DDI-5683826">
    <property type="pathway name" value="Surfactant metabolism"/>
</dbReference>
<dbReference type="Reactome" id="R-DDI-6798695">
    <property type="pathway name" value="Neutrophil degranulation"/>
</dbReference>
<dbReference type="Reactome" id="R-DDI-8963896">
    <property type="pathway name" value="HDL assembly"/>
</dbReference>
<dbReference type="PRO" id="PR:Q8T6J5"/>
<dbReference type="Proteomes" id="UP000002195">
    <property type="component" value="Chromosome 1"/>
</dbReference>
<dbReference type="GO" id="GO:0043231">
    <property type="term" value="C:intracellular membrane-bounded organelle"/>
    <property type="evidence" value="ECO:0000318"/>
    <property type="project" value="GO_Central"/>
</dbReference>
<dbReference type="GO" id="GO:0016020">
    <property type="term" value="C:membrane"/>
    <property type="evidence" value="ECO:0007669"/>
    <property type="project" value="UniProtKB-SubCell"/>
</dbReference>
<dbReference type="GO" id="GO:0140359">
    <property type="term" value="F:ABC-type transporter activity"/>
    <property type="evidence" value="ECO:0007669"/>
    <property type="project" value="InterPro"/>
</dbReference>
<dbReference type="GO" id="GO:0005524">
    <property type="term" value="F:ATP binding"/>
    <property type="evidence" value="ECO:0007669"/>
    <property type="project" value="UniProtKB-KW"/>
</dbReference>
<dbReference type="GO" id="GO:0016887">
    <property type="term" value="F:ATP hydrolysis activity"/>
    <property type="evidence" value="ECO:0007669"/>
    <property type="project" value="InterPro"/>
</dbReference>
<dbReference type="GO" id="GO:0042626">
    <property type="term" value="F:ATPase-coupled transmembrane transporter activity"/>
    <property type="evidence" value="ECO:0000318"/>
    <property type="project" value="GO_Central"/>
</dbReference>
<dbReference type="GO" id="GO:0005319">
    <property type="term" value="F:lipid transporter activity"/>
    <property type="evidence" value="ECO:0000318"/>
    <property type="project" value="GO_Central"/>
</dbReference>
<dbReference type="GO" id="GO:0006869">
    <property type="term" value="P:lipid transport"/>
    <property type="evidence" value="ECO:0000318"/>
    <property type="project" value="GO_Central"/>
</dbReference>
<dbReference type="GO" id="GO:0031288">
    <property type="term" value="P:sorocarp morphogenesis"/>
    <property type="evidence" value="ECO:0000318"/>
    <property type="project" value="GO_Central"/>
</dbReference>
<dbReference type="CDD" id="cd03263">
    <property type="entry name" value="ABC_subfamily_A"/>
    <property type="match status" value="2"/>
</dbReference>
<dbReference type="FunFam" id="3.40.50.300:FF:002530">
    <property type="entry name" value="ABC transporter A family member 5"/>
    <property type="match status" value="1"/>
</dbReference>
<dbReference type="FunFam" id="3.40.50.300:FF:000298">
    <property type="entry name" value="ATP-binding cassette sub-family A member 12"/>
    <property type="match status" value="1"/>
</dbReference>
<dbReference type="Gene3D" id="3.40.50.300">
    <property type="entry name" value="P-loop containing nucleotide triphosphate hydrolases"/>
    <property type="match status" value="2"/>
</dbReference>
<dbReference type="InterPro" id="IPR003593">
    <property type="entry name" value="AAA+_ATPase"/>
</dbReference>
<dbReference type="InterPro" id="IPR013525">
    <property type="entry name" value="ABC2_TM"/>
</dbReference>
<dbReference type="InterPro" id="IPR003439">
    <property type="entry name" value="ABC_transporter-like_ATP-bd"/>
</dbReference>
<dbReference type="InterPro" id="IPR017871">
    <property type="entry name" value="ABC_transporter-like_CS"/>
</dbReference>
<dbReference type="InterPro" id="IPR026082">
    <property type="entry name" value="ABCA"/>
</dbReference>
<dbReference type="InterPro" id="IPR027417">
    <property type="entry name" value="P-loop_NTPase"/>
</dbReference>
<dbReference type="PANTHER" id="PTHR19229:SF36">
    <property type="entry name" value="ATP-BINDING CASSETTE SUB-FAMILY A MEMBER 2"/>
    <property type="match status" value="1"/>
</dbReference>
<dbReference type="PANTHER" id="PTHR19229">
    <property type="entry name" value="ATP-BINDING CASSETTE TRANSPORTER SUBFAMILY A ABCA"/>
    <property type="match status" value="1"/>
</dbReference>
<dbReference type="Pfam" id="PF12698">
    <property type="entry name" value="ABC2_membrane_3"/>
    <property type="match status" value="2"/>
</dbReference>
<dbReference type="Pfam" id="PF00005">
    <property type="entry name" value="ABC_tran"/>
    <property type="match status" value="2"/>
</dbReference>
<dbReference type="SMART" id="SM00382">
    <property type="entry name" value="AAA"/>
    <property type="match status" value="2"/>
</dbReference>
<dbReference type="SUPFAM" id="SSF52540">
    <property type="entry name" value="P-loop containing nucleoside triphosphate hydrolases"/>
    <property type="match status" value="2"/>
</dbReference>
<dbReference type="PROSITE" id="PS00211">
    <property type="entry name" value="ABC_TRANSPORTER_1"/>
    <property type="match status" value="1"/>
</dbReference>
<dbReference type="PROSITE" id="PS50893">
    <property type="entry name" value="ABC_TRANSPORTER_2"/>
    <property type="match status" value="2"/>
</dbReference>
<keyword id="KW-0067">ATP-binding</keyword>
<keyword id="KW-0472">Membrane</keyword>
<keyword id="KW-0547">Nucleotide-binding</keyword>
<keyword id="KW-1185">Reference proteome</keyword>
<keyword id="KW-0677">Repeat</keyword>
<keyword id="KW-0812">Transmembrane</keyword>
<keyword id="KW-1133">Transmembrane helix</keyword>
<keyword id="KW-0813">Transport</keyword>
<protein>
    <recommendedName>
        <fullName>ABC transporter A family member 2</fullName>
    </recommendedName>
    <alternativeName>
        <fullName>ABC transporter ABCA.2</fullName>
    </alternativeName>
</protein>
<evidence type="ECO:0000255" key="1"/>
<evidence type="ECO:0000255" key="2">
    <source>
        <dbReference type="PROSITE-ProRule" id="PRU00434"/>
    </source>
</evidence>
<evidence type="ECO:0000305" key="3"/>
<feature type="chain" id="PRO_0000363834" description="ABC transporter A family member 2">
    <location>
        <begin position="1"/>
        <end position="1621"/>
    </location>
</feature>
<feature type="transmembrane region" description="Helical" evidence="1">
    <location>
        <begin position="30"/>
        <end position="50"/>
    </location>
</feature>
<feature type="transmembrane region" description="Helical" evidence="1">
    <location>
        <begin position="234"/>
        <end position="254"/>
    </location>
</feature>
<feature type="transmembrane region" description="Helical" evidence="1">
    <location>
        <begin position="276"/>
        <end position="296"/>
    </location>
</feature>
<feature type="transmembrane region" description="Helical" evidence="1">
    <location>
        <begin position="309"/>
        <end position="329"/>
    </location>
</feature>
<feature type="transmembrane region" description="Helical" evidence="1">
    <location>
        <begin position="338"/>
        <end position="358"/>
    </location>
</feature>
<feature type="transmembrane region" description="Helical" evidence="1">
    <location>
        <begin position="365"/>
        <end position="385"/>
    </location>
</feature>
<feature type="transmembrane region" description="Helical" evidence="1">
    <location>
        <begin position="405"/>
        <end position="425"/>
    </location>
</feature>
<feature type="transmembrane region" description="Helical" evidence="1">
    <location>
        <begin position="856"/>
        <end position="876"/>
    </location>
</feature>
<feature type="transmembrane region" description="Helical" evidence="1">
    <location>
        <begin position="1033"/>
        <end position="1053"/>
    </location>
</feature>
<feature type="transmembrane region" description="Helical" evidence="1">
    <location>
        <begin position="1083"/>
        <end position="1103"/>
    </location>
</feature>
<feature type="transmembrane region" description="Helical" evidence="1">
    <location>
        <begin position="1111"/>
        <end position="1131"/>
    </location>
</feature>
<feature type="transmembrane region" description="Helical" evidence="1">
    <location>
        <begin position="1142"/>
        <end position="1162"/>
    </location>
</feature>
<feature type="transmembrane region" description="Helical" evidence="1">
    <location>
        <begin position="1183"/>
        <end position="1203"/>
    </location>
</feature>
<feature type="transmembrane region" description="Helical" evidence="1">
    <location>
        <begin position="1227"/>
        <end position="1247"/>
    </location>
</feature>
<feature type="domain" description="ABC transporter 1" evidence="2">
    <location>
        <begin position="484"/>
        <end position="717"/>
    </location>
</feature>
<feature type="domain" description="ABC transporter 2" evidence="2">
    <location>
        <begin position="1293"/>
        <end position="1528"/>
    </location>
</feature>
<feature type="binding site" evidence="2">
    <location>
        <begin position="520"/>
        <end position="527"/>
    </location>
    <ligand>
        <name>ATP</name>
        <dbReference type="ChEBI" id="CHEBI:30616"/>
        <label>1</label>
    </ligand>
</feature>
<feature type="binding site" evidence="2">
    <location>
        <begin position="1331"/>
        <end position="1338"/>
    </location>
    <ligand>
        <name>ATP</name>
        <dbReference type="ChEBI" id="CHEBI:30616"/>
        <label>2</label>
    </ligand>
</feature>
<organism>
    <name type="scientific">Dictyostelium discoideum</name>
    <name type="common">Social amoeba</name>
    <dbReference type="NCBI Taxonomy" id="44689"/>
    <lineage>
        <taxon>Eukaryota</taxon>
        <taxon>Amoebozoa</taxon>
        <taxon>Evosea</taxon>
        <taxon>Eumycetozoa</taxon>
        <taxon>Dictyostelia</taxon>
        <taxon>Dictyosteliales</taxon>
        <taxon>Dictyosteliaceae</taxon>
        <taxon>Dictyostelium</taxon>
    </lineage>
</organism>
<reference key="1">
    <citation type="journal article" date="2002" name="Eukaryot. Cell">
        <title>Evolutionary analyses of ABC transporters of Dictyostelium discoideum.</title>
        <authorList>
            <person name="Anjard C."/>
            <person name="Loomis W.F."/>
        </authorList>
    </citation>
    <scope>NUCLEOTIDE SEQUENCE [GENOMIC DNA]</scope>
    <scope>NOMENCLATURE</scope>
    <source>
        <strain>AX4</strain>
    </source>
</reference>
<reference key="2">
    <citation type="journal article" date="2005" name="Nature">
        <title>The genome of the social amoeba Dictyostelium discoideum.</title>
        <authorList>
            <person name="Eichinger L."/>
            <person name="Pachebat J.A."/>
            <person name="Gloeckner G."/>
            <person name="Rajandream M.A."/>
            <person name="Sucgang R."/>
            <person name="Berriman M."/>
            <person name="Song J."/>
            <person name="Olsen R."/>
            <person name="Szafranski K."/>
            <person name="Xu Q."/>
            <person name="Tunggal B."/>
            <person name="Kummerfeld S."/>
            <person name="Madera M."/>
            <person name="Konfortov B.A."/>
            <person name="Rivero F."/>
            <person name="Bankier A.T."/>
            <person name="Lehmann R."/>
            <person name="Hamlin N."/>
            <person name="Davies R."/>
            <person name="Gaudet P."/>
            <person name="Fey P."/>
            <person name="Pilcher K."/>
            <person name="Chen G."/>
            <person name="Saunders D."/>
            <person name="Sodergren E.J."/>
            <person name="Davis P."/>
            <person name="Kerhornou A."/>
            <person name="Nie X."/>
            <person name="Hall N."/>
            <person name="Anjard C."/>
            <person name="Hemphill L."/>
            <person name="Bason N."/>
            <person name="Farbrother P."/>
            <person name="Desany B."/>
            <person name="Just E."/>
            <person name="Morio T."/>
            <person name="Rost R."/>
            <person name="Churcher C.M."/>
            <person name="Cooper J."/>
            <person name="Haydock S."/>
            <person name="van Driessche N."/>
            <person name="Cronin A."/>
            <person name="Goodhead I."/>
            <person name="Muzny D.M."/>
            <person name="Mourier T."/>
            <person name="Pain A."/>
            <person name="Lu M."/>
            <person name="Harper D."/>
            <person name="Lindsay R."/>
            <person name="Hauser H."/>
            <person name="James K.D."/>
            <person name="Quiles M."/>
            <person name="Madan Babu M."/>
            <person name="Saito T."/>
            <person name="Buchrieser C."/>
            <person name="Wardroper A."/>
            <person name="Felder M."/>
            <person name="Thangavelu M."/>
            <person name="Johnson D."/>
            <person name="Knights A."/>
            <person name="Loulseged H."/>
            <person name="Mungall K.L."/>
            <person name="Oliver K."/>
            <person name="Price C."/>
            <person name="Quail M.A."/>
            <person name="Urushihara H."/>
            <person name="Hernandez J."/>
            <person name="Rabbinowitsch E."/>
            <person name="Steffen D."/>
            <person name="Sanders M."/>
            <person name="Ma J."/>
            <person name="Kohara Y."/>
            <person name="Sharp S."/>
            <person name="Simmonds M.N."/>
            <person name="Spiegler S."/>
            <person name="Tivey A."/>
            <person name="Sugano S."/>
            <person name="White B."/>
            <person name="Walker D."/>
            <person name="Woodward J.R."/>
            <person name="Winckler T."/>
            <person name="Tanaka Y."/>
            <person name="Shaulsky G."/>
            <person name="Schleicher M."/>
            <person name="Weinstock G.M."/>
            <person name="Rosenthal A."/>
            <person name="Cox E.C."/>
            <person name="Chisholm R.L."/>
            <person name="Gibbs R.A."/>
            <person name="Loomis W.F."/>
            <person name="Platzer M."/>
            <person name="Kay R.R."/>
            <person name="Williams J.G."/>
            <person name="Dear P.H."/>
            <person name="Noegel A.A."/>
            <person name="Barrell B.G."/>
            <person name="Kuspa A."/>
        </authorList>
    </citation>
    <scope>NUCLEOTIDE SEQUENCE [LARGE SCALE GENOMIC DNA]</scope>
    <source>
        <strain>AX4</strain>
    </source>
</reference>
<proteinExistence type="inferred from homology"/>